<feature type="chain" id="PRO_1000101126" description="Lysine--tRNA ligase">
    <location>
        <begin position="1"/>
        <end position="503"/>
    </location>
</feature>
<feature type="binding site" evidence="1">
    <location>
        <position position="413"/>
    </location>
    <ligand>
        <name>Mg(2+)</name>
        <dbReference type="ChEBI" id="CHEBI:18420"/>
        <label>1</label>
    </ligand>
</feature>
<feature type="binding site" evidence="1">
    <location>
        <position position="420"/>
    </location>
    <ligand>
        <name>Mg(2+)</name>
        <dbReference type="ChEBI" id="CHEBI:18420"/>
        <label>1</label>
    </ligand>
</feature>
<feature type="binding site" evidence="1">
    <location>
        <position position="420"/>
    </location>
    <ligand>
        <name>Mg(2+)</name>
        <dbReference type="ChEBI" id="CHEBI:18420"/>
        <label>2</label>
    </ligand>
</feature>
<organism>
    <name type="scientific">Mannheimia succiniciproducens (strain KCTC 0769BP / MBEL55E)</name>
    <dbReference type="NCBI Taxonomy" id="221988"/>
    <lineage>
        <taxon>Bacteria</taxon>
        <taxon>Pseudomonadati</taxon>
        <taxon>Pseudomonadota</taxon>
        <taxon>Gammaproteobacteria</taxon>
        <taxon>Pasteurellales</taxon>
        <taxon>Pasteurellaceae</taxon>
        <taxon>Basfia</taxon>
    </lineage>
</organism>
<keyword id="KW-0030">Aminoacyl-tRNA synthetase</keyword>
<keyword id="KW-0067">ATP-binding</keyword>
<keyword id="KW-0963">Cytoplasm</keyword>
<keyword id="KW-0436">Ligase</keyword>
<keyword id="KW-0460">Magnesium</keyword>
<keyword id="KW-0479">Metal-binding</keyword>
<keyword id="KW-0547">Nucleotide-binding</keyword>
<keyword id="KW-0648">Protein biosynthesis</keyword>
<comment type="catalytic activity">
    <reaction evidence="1">
        <text>tRNA(Lys) + L-lysine + ATP = L-lysyl-tRNA(Lys) + AMP + diphosphate</text>
        <dbReference type="Rhea" id="RHEA:20792"/>
        <dbReference type="Rhea" id="RHEA-COMP:9696"/>
        <dbReference type="Rhea" id="RHEA-COMP:9697"/>
        <dbReference type="ChEBI" id="CHEBI:30616"/>
        <dbReference type="ChEBI" id="CHEBI:32551"/>
        <dbReference type="ChEBI" id="CHEBI:33019"/>
        <dbReference type="ChEBI" id="CHEBI:78442"/>
        <dbReference type="ChEBI" id="CHEBI:78529"/>
        <dbReference type="ChEBI" id="CHEBI:456215"/>
        <dbReference type="EC" id="6.1.1.6"/>
    </reaction>
</comment>
<comment type="cofactor">
    <cofactor evidence="1">
        <name>Mg(2+)</name>
        <dbReference type="ChEBI" id="CHEBI:18420"/>
    </cofactor>
    <text evidence="1">Binds 3 Mg(2+) ions per subunit.</text>
</comment>
<comment type="subunit">
    <text evidence="1">Homodimer.</text>
</comment>
<comment type="subcellular location">
    <subcellularLocation>
        <location evidence="1">Cytoplasm</location>
    </subcellularLocation>
</comment>
<comment type="similarity">
    <text evidence="1">Belongs to the class-II aminoacyl-tRNA synthetase family.</text>
</comment>
<accession>Q65SB0</accession>
<name>SYK_MANSM</name>
<evidence type="ECO:0000255" key="1">
    <source>
        <dbReference type="HAMAP-Rule" id="MF_00252"/>
    </source>
</evidence>
<dbReference type="EC" id="6.1.1.6" evidence="1"/>
<dbReference type="EMBL" id="AE016827">
    <property type="protein sequence ID" value="AAU38150.1"/>
    <property type="molecule type" value="Genomic_DNA"/>
</dbReference>
<dbReference type="RefSeq" id="WP_011200716.1">
    <property type="nucleotide sequence ID" value="NC_006300.1"/>
</dbReference>
<dbReference type="SMR" id="Q65SB0"/>
<dbReference type="STRING" id="221988.MS1543"/>
<dbReference type="KEGG" id="msu:MS1543"/>
<dbReference type="eggNOG" id="COG1190">
    <property type="taxonomic scope" value="Bacteria"/>
</dbReference>
<dbReference type="HOGENOM" id="CLU_008255_6_0_6"/>
<dbReference type="OrthoDB" id="9802326at2"/>
<dbReference type="Proteomes" id="UP000000607">
    <property type="component" value="Chromosome"/>
</dbReference>
<dbReference type="GO" id="GO:0005829">
    <property type="term" value="C:cytosol"/>
    <property type="evidence" value="ECO:0007669"/>
    <property type="project" value="TreeGrafter"/>
</dbReference>
<dbReference type="GO" id="GO:0005524">
    <property type="term" value="F:ATP binding"/>
    <property type="evidence" value="ECO:0007669"/>
    <property type="project" value="UniProtKB-UniRule"/>
</dbReference>
<dbReference type="GO" id="GO:0004824">
    <property type="term" value="F:lysine-tRNA ligase activity"/>
    <property type="evidence" value="ECO:0007669"/>
    <property type="project" value="UniProtKB-UniRule"/>
</dbReference>
<dbReference type="GO" id="GO:0000287">
    <property type="term" value="F:magnesium ion binding"/>
    <property type="evidence" value="ECO:0007669"/>
    <property type="project" value="UniProtKB-UniRule"/>
</dbReference>
<dbReference type="GO" id="GO:0000049">
    <property type="term" value="F:tRNA binding"/>
    <property type="evidence" value="ECO:0007669"/>
    <property type="project" value="TreeGrafter"/>
</dbReference>
<dbReference type="GO" id="GO:0006430">
    <property type="term" value="P:lysyl-tRNA aminoacylation"/>
    <property type="evidence" value="ECO:0007669"/>
    <property type="project" value="UniProtKB-UniRule"/>
</dbReference>
<dbReference type="CDD" id="cd00775">
    <property type="entry name" value="LysRS_core"/>
    <property type="match status" value="1"/>
</dbReference>
<dbReference type="CDD" id="cd04322">
    <property type="entry name" value="LysRS_N"/>
    <property type="match status" value="1"/>
</dbReference>
<dbReference type="FunFam" id="2.40.50.140:FF:000024">
    <property type="entry name" value="Lysine--tRNA ligase"/>
    <property type="match status" value="1"/>
</dbReference>
<dbReference type="FunFam" id="3.30.930.10:FF:000001">
    <property type="entry name" value="Lysine--tRNA ligase"/>
    <property type="match status" value="1"/>
</dbReference>
<dbReference type="Gene3D" id="3.30.930.10">
    <property type="entry name" value="Bira Bifunctional Protein, Domain 2"/>
    <property type="match status" value="1"/>
</dbReference>
<dbReference type="Gene3D" id="2.40.50.140">
    <property type="entry name" value="Nucleic acid-binding proteins"/>
    <property type="match status" value="1"/>
</dbReference>
<dbReference type="HAMAP" id="MF_00252">
    <property type="entry name" value="Lys_tRNA_synth_class2"/>
    <property type="match status" value="1"/>
</dbReference>
<dbReference type="InterPro" id="IPR004364">
    <property type="entry name" value="Aa-tRNA-synt_II"/>
</dbReference>
<dbReference type="InterPro" id="IPR006195">
    <property type="entry name" value="aa-tRNA-synth_II"/>
</dbReference>
<dbReference type="InterPro" id="IPR045864">
    <property type="entry name" value="aa-tRNA-synth_II/BPL/LPL"/>
</dbReference>
<dbReference type="InterPro" id="IPR002313">
    <property type="entry name" value="Lys-tRNA-ligase_II"/>
</dbReference>
<dbReference type="InterPro" id="IPR034762">
    <property type="entry name" value="Lys-tRNA-ligase_II_bac/euk"/>
</dbReference>
<dbReference type="InterPro" id="IPR044136">
    <property type="entry name" value="Lys-tRNA-ligase_II_N"/>
</dbReference>
<dbReference type="InterPro" id="IPR018149">
    <property type="entry name" value="Lys-tRNA-synth_II_C"/>
</dbReference>
<dbReference type="InterPro" id="IPR012340">
    <property type="entry name" value="NA-bd_OB-fold"/>
</dbReference>
<dbReference type="InterPro" id="IPR004365">
    <property type="entry name" value="NA-bd_OB_tRNA"/>
</dbReference>
<dbReference type="NCBIfam" id="TIGR00499">
    <property type="entry name" value="lysS_bact"/>
    <property type="match status" value="1"/>
</dbReference>
<dbReference type="NCBIfam" id="NF001756">
    <property type="entry name" value="PRK00484.1"/>
    <property type="match status" value="1"/>
</dbReference>
<dbReference type="PANTHER" id="PTHR42918:SF15">
    <property type="entry name" value="LYSINE--TRNA LIGASE, CHLOROPLASTIC_MITOCHONDRIAL"/>
    <property type="match status" value="1"/>
</dbReference>
<dbReference type="PANTHER" id="PTHR42918">
    <property type="entry name" value="LYSYL-TRNA SYNTHETASE"/>
    <property type="match status" value="1"/>
</dbReference>
<dbReference type="Pfam" id="PF00152">
    <property type="entry name" value="tRNA-synt_2"/>
    <property type="match status" value="1"/>
</dbReference>
<dbReference type="Pfam" id="PF01336">
    <property type="entry name" value="tRNA_anti-codon"/>
    <property type="match status" value="1"/>
</dbReference>
<dbReference type="PIRSF" id="PIRSF039101">
    <property type="entry name" value="LysRS2"/>
    <property type="match status" value="1"/>
</dbReference>
<dbReference type="PRINTS" id="PR00982">
    <property type="entry name" value="TRNASYNTHLYS"/>
</dbReference>
<dbReference type="SUPFAM" id="SSF55681">
    <property type="entry name" value="Class II aaRS and biotin synthetases"/>
    <property type="match status" value="1"/>
</dbReference>
<dbReference type="SUPFAM" id="SSF50249">
    <property type="entry name" value="Nucleic acid-binding proteins"/>
    <property type="match status" value="1"/>
</dbReference>
<dbReference type="PROSITE" id="PS50862">
    <property type="entry name" value="AA_TRNA_LIGASE_II"/>
    <property type="match status" value="1"/>
</dbReference>
<reference key="1">
    <citation type="journal article" date="2004" name="Nat. Biotechnol.">
        <title>The genome sequence of the capnophilic rumen bacterium Mannheimia succiniciproducens.</title>
        <authorList>
            <person name="Hong S.H."/>
            <person name="Kim J.S."/>
            <person name="Lee S.Y."/>
            <person name="In Y.H."/>
            <person name="Choi S.S."/>
            <person name="Rih J.-K."/>
            <person name="Kim C.H."/>
            <person name="Jeong H."/>
            <person name="Hur C.G."/>
            <person name="Kim J.J."/>
        </authorList>
    </citation>
    <scope>NUCLEOTIDE SEQUENCE [LARGE SCALE GENOMIC DNA]</scope>
    <source>
        <strain>KCTC 0769BP / MBEL55E</strain>
    </source>
</reference>
<protein>
    <recommendedName>
        <fullName evidence="1">Lysine--tRNA ligase</fullName>
        <ecNumber evidence="1">6.1.1.6</ecNumber>
    </recommendedName>
    <alternativeName>
        <fullName evidence="1">Lysyl-tRNA synthetase</fullName>
        <shortName evidence="1">LysRS</shortName>
    </alternativeName>
</protein>
<proteinExistence type="inferred from homology"/>
<gene>
    <name evidence="1" type="primary">lysS</name>
    <name type="ordered locus">MS1543</name>
</gene>
<sequence>MSEQQNAELDFHGEMAVRREKLAALRAKGNAFPNTFRRDALAQDLHNQYDETDGEQLKEKDLHVAVAGRIMTRRTMGKATFITIQDMSGKIQLYVARDNLPEGVYGEDVKSWDLGDIVGIKGTLFKTKTNELTVKAHEVQLLTKALRPLPDKFHGLSDQETRYRQRYLDLISNEESRRTFVIRSKVIAGIREYFIGKGFIEVETPMLQVIPGGAAARPFVTHHNALDIDMYLRIAPELYLKRLVVGGFERVFELNRNFRNEGVSVRHNPEFTMIEYYQAYADYHDLMDNTEELLRKLALDILGTTIVPYGEYEFDFGKPFERITMHDAVIKYGAEKGIVKEDLYDLDRAKAAAAKLGIEIQKSWGLGSIVNAIFEEVAEHHLIQPTFLMAHPAEISPLARRNDENPEVTDRFELFIGGREIGNGFSELNDAEDQAERFDAQVAAKDAGDDEAMFKDDDFVTALEHGLPPTAGEGLGIDRLAMLFANAPSIRDVILFPAMKHKG</sequence>